<accession>P25335</accession>
<accession>D6VVW0</accession>
<protein>
    <recommendedName>
        <fullName>Allantoicase</fullName>
        <ecNumber>3.5.3.4</ecNumber>
    </recommendedName>
    <alternativeName>
        <fullName>Allantoate amidinohydrolase</fullName>
    </alternativeName>
</protein>
<sequence>MKFFSLADEAEFKSIIISKNKAVDVIGSKLGGQVVSFSDEWFASAENLIQPTAPIRDPTRFVHSGAWYDGWETRRHNEMEYDWVIIKMGVAAAHIIGGEIDTAFFNGNHAPFVSIEALYDEGEEGNIVEDDSRWVEIVEKFECGPSQRHLFVRGNGLTKERFTHIKLKMYPDGGIARFRLYGRVVPPELKTKDHIIDLAYVCNGAVALKYSDQHFGSVDNLLLPGRGHDMSDGWETKRSRQPGHTDWAVIQLGRESSFIEKIIVDTAHFRGNFPQFITVEGCLKESESSENTGEGTWVELVGKSKTGPDKEHVYEIRKSIRVSHVKLTIIPDGGVKRIRVWGY</sequence>
<dbReference type="EC" id="3.5.3.4"/>
<dbReference type="EMBL" id="M64720">
    <property type="protein sequence ID" value="AAA34554.1"/>
    <property type="molecule type" value="Genomic_DNA"/>
</dbReference>
<dbReference type="EMBL" id="X60460">
    <property type="protein sequence ID" value="CAA42994.1"/>
    <property type="molecule type" value="Genomic_DNA"/>
</dbReference>
<dbReference type="EMBL" id="Z38061">
    <property type="protein sequence ID" value="CAA86189.1"/>
    <property type="molecule type" value="Genomic_DNA"/>
</dbReference>
<dbReference type="EMBL" id="BK006942">
    <property type="protein sequence ID" value="DAA08576.1"/>
    <property type="molecule type" value="Genomic_DNA"/>
</dbReference>
<dbReference type="PIR" id="JH0442">
    <property type="entry name" value="JH0442"/>
</dbReference>
<dbReference type="RefSeq" id="NP_012295.1">
    <property type="nucleotide sequence ID" value="NM_001179551.1"/>
</dbReference>
<dbReference type="PDB" id="1O59">
    <property type="method" value="X-ray"/>
    <property type="resolution" value="2.40 A"/>
    <property type="chains" value="A=1-343"/>
</dbReference>
<dbReference type="PDB" id="1SG3">
    <property type="method" value="X-ray"/>
    <property type="resolution" value="2.60 A"/>
    <property type="chains" value="A/B=1-343"/>
</dbReference>
<dbReference type="PDBsum" id="1O59"/>
<dbReference type="PDBsum" id="1SG3"/>
<dbReference type="SMR" id="P25335"/>
<dbReference type="BioGRID" id="35020">
    <property type="interactions" value="98"/>
</dbReference>
<dbReference type="FunCoup" id="P25335">
    <property type="interactions" value="96"/>
</dbReference>
<dbReference type="IntAct" id="P25335">
    <property type="interactions" value="1"/>
</dbReference>
<dbReference type="STRING" id="4932.YIR029W"/>
<dbReference type="iPTMnet" id="P25335"/>
<dbReference type="PaxDb" id="4932-YIR029W"/>
<dbReference type="PeptideAtlas" id="P25335"/>
<dbReference type="EnsemblFungi" id="YIR029W_mRNA">
    <property type="protein sequence ID" value="YIR029W"/>
    <property type="gene ID" value="YIR029W"/>
</dbReference>
<dbReference type="GeneID" id="854847"/>
<dbReference type="KEGG" id="sce:YIR029W"/>
<dbReference type="AGR" id="SGD:S000001468"/>
<dbReference type="SGD" id="S000001468">
    <property type="gene designation" value="DAL2"/>
</dbReference>
<dbReference type="VEuPathDB" id="FungiDB:YIR029W"/>
<dbReference type="eggNOG" id="KOG4145">
    <property type="taxonomic scope" value="Eukaryota"/>
</dbReference>
<dbReference type="GeneTree" id="ENSGT00390000001793"/>
<dbReference type="HOGENOM" id="CLU_038797_0_0_1"/>
<dbReference type="InParanoid" id="P25335"/>
<dbReference type="OMA" id="MDDGWET"/>
<dbReference type="OrthoDB" id="10266039at2759"/>
<dbReference type="BioCyc" id="MetaCyc:YIR029W-MONOMER"/>
<dbReference type="BioCyc" id="YEAST:YIR029W-MONOMER"/>
<dbReference type="UniPathway" id="UPA00395">
    <property type="reaction ID" value="UER00654"/>
</dbReference>
<dbReference type="BioGRID-ORCS" id="854847">
    <property type="hits" value="7 hits in 10 CRISPR screens"/>
</dbReference>
<dbReference type="EvolutionaryTrace" id="P25335"/>
<dbReference type="PRO" id="PR:P25335"/>
<dbReference type="Proteomes" id="UP000002311">
    <property type="component" value="Chromosome IX"/>
</dbReference>
<dbReference type="RNAct" id="P25335">
    <property type="molecule type" value="protein"/>
</dbReference>
<dbReference type="GO" id="GO:0004037">
    <property type="term" value="F:allantoicase activity"/>
    <property type="evidence" value="ECO:0000314"/>
    <property type="project" value="SGD"/>
</dbReference>
<dbReference type="GO" id="GO:0000256">
    <property type="term" value="P:allantoin catabolic process"/>
    <property type="evidence" value="ECO:0000315"/>
    <property type="project" value="SGD"/>
</dbReference>
<dbReference type="GO" id="GO:0006144">
    <property type="term" value="P:purine nucleobase metabolic process"/>
    <property type="evidence" value="ECO:0007669"/>
    <property type="project" value="UniProtKB-KW"/>
</dbReference>
<dbReference type="FunFam" id="2.60.120.260:FF:000078">
    <property type="entry name" value="DAL2p Allantoicase"/>
    <property type="match status" value="1"/>
</dbReference>
<dbReference type="FunFam" id="2.60.120.260:FF:000059">
    <property type="entry name" value="Probable allantoicase"/>
    <property type="match status" value="1"/>
</dbReference>
<dbReference type="Gene3D" id="2.60.120.260">
    <property type="entry name" value="Galactose-binding domain-like"/>
    <property type="match status" value="2"/>
</dbReference>
<dbReference type="HAMAP" id="MF_00813">
    <property type="entry name" value="Allantoicase"/>
    <property type="match status" value="1"/>
</dbReference>
<dbReference type="InterPro" id="IPR005164">
    <property type="entry name" value="Allantoicase"/>
</dbReference>
<dbReference type="InterPro" id="IPR015908">
    <property type="entry name" value="Allantoicase_dom"/>
</dbReference>
<dbReference type="InterPro" id="IPR008979">
    <property type="entry name" value="Galactose-bd-like_sf"/>
</dbReference>
<dbReference type="NCBIfam" id="TIGR02961">
    <property type="entry name" value="allantoicase"/>
    <property type="match status" value="1"/>
</dbReference>
<dbReference type="PANTHER" id="PTHR12045">
    <property type="entry name" value="ALLANTOICASE"/>
    <property type="match status" value="1"/>
</dbReference>
<dbReference type="PANTHER" id="PTHR12045:SF3">
    <property type="entry name" value="INACTIVE ALLANTOICASE-RELATED"/>
    <property type="match status" value="1"/>
</dbReference>
<dbReference type="Pfam" id="PF03561">
    <property type="entry name" value="Allantoicase"/>
    <property type="match status" value="2"/>
</dbReference>
<dbReference type="PIRSF" id="PIRSF016516">
    <property type="entry name" value="Allantoicase"/>
    <property type="match status" value="1"/>
</dbReference>
<dbReference type="SUPFAM" id="SSF49785">
    <property type="entry name" value="Galactose-binding domain-like"/>
    <property type="match status" value="2"/>
</dbReference>
<feature type="chain" id="PRO_0000205914" description="Allantoicase">
    <location>
        <begin position="1"/>
        <end position="343"/>
    </location>
</feature>
<feature type="sequence conflict" description="In Ref. 2; CAA42994." evidence="1" ref="2">
    <original>A</original>
    <variation>S</variation>
    <location>
        <position position="93"/>
    </location>
</feature>
<feature type="sequence conflict" description="In Ref. 2; CAA42994." evidence="1" ref="2">
    <original>WV</original>
    <variation>SL</variation>
    <location>
        <begin position="134"/>
        <end position="135"/>
    </location>
</feature>
<feature type="strand" evidence="2">
    <location>
        <begin position="2"/>
        <end position="4"/>
    </location>
</feature>
<feature type="helix" evidence="2">
    <location>
        <begin position="6"/>
        <end position="8"/>
    </location>
</feature>
<feature type="helix" evidence="2">
    <location>
        <begin position="9"/>
        <end position="16"/>
    </location>
</feature>
<feature type="turn" evidence="2">
    <location>
        <begin position="17"/>
        <end position="20"/>
    </location>
</feature>
<feature type="helix" evidence="2">
    <location>
        <begin position="28"/>
        <end position="30"/>
    </location>
</feature>
<feature type="strand" evidence="2">
    <location>
        <begin position="33"/>
        <end position="38"/>
    </location>
</feature>
<feature type="strand" evidence="2">
    <location>
        <begin position="41"/>
        <end position="43"/>
    </location>
</feature>
<feature type="helix" evidence="2">
    <location>
        <begin position="45"/>
        <end position="49"/>
    </location>
</feature>
<feature type="strand" evidence="2">
    <location>
        <begin position="69"/>
        <end position="72"/>
    </location>
</feature>
<feature type="strand" evidence="2">
    <location>
        <begin position="78"/>
        <end position="80"/>
    </location>
</feature>
<feature type="strand" evidence="2">
    <location>
        <begin position="82"/>
        <end position="87"/>
    </location>
</feature>
<feature type="strand" evidence="2">
    <location>
        <begin position="89"/>
        <end position="91"/>
    </location>
</feature>
<feature type="strand" evidence="2">
    <location>
        <begin position="93"/>
        <end position="101"/>
    </location>
</feature>
<feature type="strand" evidence="2">
    <location>
        <begin position="106"/>
        <end position="109"/>
    </location>
</feature>
<feature type="strand" evidence="2">
    <location>
        <begin position="111"/>
        <end position="118"/>
    </location>
</feature>
<feature type="strand" evidence="2">
    <location>
        <begin position="135"/>
        <end position="142"/>
    </location>
</feature>
<feature type="strand" evidence="2">
    <location>
        <begin position="148"/>
        <end position="152"/>
    </location>
</feature>
<feature type="strand" evidence="2">
    <location>
        <begin position="162"/>
        <end position="171"/>
    </location>
</feature>
<feature type="strand" evidence="2">
    <location>
        <begin position="174"/>
        <end position="184"/>
    </location>
</feature>
<feature type="helix" evidence="2">
    <location>
        <begin position="201"/>
        <end position="203"/>
    </location>
</feature>
<feature type="strand" evidence="2">
    <location>
        <begin position="206"/>
        <end position="211"/>
    </location>
</feature>
<feature type="strand" evidence="2">
    <location>
        <begin position="214"/>
        <end position="216"/>
    </location>
</feature>
<feature type="helix" evidence="2">
    <location>
        <begin position="218"/>
        <end position="222"/>
    </location>
</feature>
<feature type="strand" evidence="2">
    <location>
        <begin position="224"/>
        <end position="226"/>
    </location>
</feature>
<feature type="helix" evidence="2">
    <location>
        <begin position="230"/>
        <end position="232"/>
    </location>
</feature>
<feature type="strand" evidence="2">
    <location>
        <begin position="233"/>
        <end position="235"/>
    </location>
</feature>
<feature type="strand" evidence="2">
    <location>
        <begin position="246"/>
        <end position="251"/>
    </location>
</feature>
<feature type="strand" evidence="2">
    <location>
        <begin position="257"/>
        <end position="265"/>
    </location>
</feature>
<feature type="strand" evidence="2">
    <location>
        <begin position="270"/>
        <end position="272"/>
    </location>
</feature>
<feature type="strand" evidence="2">
    <location>
        <begin position="275"/>
        <end position="282"/>
    </location>
</feature>
<feature type="strand" evidence="2">
    <location>
        <begin position="297"/>
        <end position="305"/>
    </location>
</feature>
<feature type="strand" evidence="2">
    <location>
        <begin position="311"/>
        <end position="319"/>
    </location>
</feature>
<feature type="strand" evidence="2">
    <location>
        <begin position="323"/>
        <end position="331"/>
    </location>
</feature>
<feature type="strand" evidence="2">
    <location>
        <begin position="337"/>
        <end position="343"/>
    </location>
</feature>
<name>ALLC_YEAST</name>
<proteinExistence type="evidence at protein level"/>
<gene>
    <name type="primary">DAL2</name>
    <name type="synonym">ALC1</name>
    <name type="ordered locus">YIR029W</name>
</gene>
<organism>
    <name type="scientific">Saccharomyces cerevisiae (strain ATCC 204508 / S288c)</name>
    <name type="common">Baker's yeast</name>
    <dbReference type="NCBI Taxonomy" id="559292"/>
    <lineage>
        <taxon>Eukaryota</taxon>
        <taxon>Fungi</taxon>
        <taxon>Dikarya</taxon>
        <taxon>Ascomycota</taxon>
        <taxon>Saccharomycotina</taxon>
        <taxon>Saccharomycetes</taxon>
        <taxon>Saccharomycetales</taxon>
        <taxon>Saccharomycetaceae</taxon>
        <taxon>Saccharomyces</taxon>
    </lineage>
</organism>
<evidence type="ECO:0000305" key="1"/>
<evidence type="ECO:0007829" key="2">
    <source>
        <dbReference type="PDB" id="1O59"/>
    </source>
</evidence>
<reference key="1">
    <citation type="journal article" date="1991" name="Gene">
        <title>Sequences of two adjacent genes, one (DAL2) encoding allantoicase and another (DCG1) sensitive to nitrogen-catabolite repression in Saccharomyces cerevisiae.</title>
        <authorList>
            <person name="Yoo H.S."/>
            <person name="Cooper T.G."/>
        </authorList>
    </citation>
    <scope>NUCLEOTIDE SEQUENCE [GENOMIC DNA]</scope>
</reference>
<reference key="2">
    <citation type="journal article" date="1991" name="Yeast">
        <title>Cloning of a Saccharomyces cerevisiae gene encoding a protein homologous to allantoicase of Neurospora crassa.</title>
        <authorList>
            <person name="Lee F.-J.S."/>
            <person name="Moss J."/>
        </authorList>
    </citation>
    <scope>NUCLEOTIDE SEQUENCE [GENOMIC DNA]</scope>
</reference>
<reference key="3">
    <citation type="journal article" date="1997" name="Nature">
        <title>The nucleotide sequence of Saccharomyces cerevisiae chromosome IX.</title>
        <authorList>
            <person name="Churcher C.M."/>
            <person name="Bowman S."/>
            <person name="Badcock K."/>
            <person name="Bankier A.T."/>
            <person name="Brown D."/>
            <person name="Chillingworth T."/>
            <person name="Connor R."/>
            <person name="Devlin K."/>
            <person name="Gentles S."/>
            <person name="Hamlin N."/>
            <person name="Harris D.E."/>
            <person name="Horsnell T."/>
            <person name="Hunt S."/>
            <person name="Jagels K."/>
            <person name="Jones M."/>
            <person name="Lye G."/>
            <person name="Moule S."/>
            <person name="Odell C."/>
            <person name="Pearson D."/>
            <person name="Rajandream M.A."/>
            <person name="Rice P."/>
            <person name="Rowley N."/>
            <person name="Skelton J."/>
            <person name="Smith V."/>
            <person name="Walsh S.V."/>
            <person name="Whitehead S."/>
            <person name="Barrell B.G."/>
        </authorList>
    </citation>
    <scope>NUCLEOTIDE SEQUENCE [LARGE SCALE GENOMIC DNA]</scope>
    <source>
        <strain>ATCC 204508 / S288c</strain>
    </source>
</reference>
<reference key="4">
    <citation type="journal article" date="2014" name="G3 (Bethesda)">
        <title>The reference genome sequence of Saccharomyces cerevisiae: Then and now.</title>
        <authorList>
            <person name="Engel S.R."/>
            <person name="Dietrich F.S."/>
            <person name="Fisk D.G."/>
            <person name="Binkley G."/>
            <person name="Balakrishnan R."/>
            <person name="Costanzo M.C."/>
            <person name="Dwight S.S."/>
            <person name="Hitz B.C."/>
            <person name="Karra K."/>
            <person name="Nash R.S."/>
            <person name="Weng S."/>
            <person name="Wong E.D."/>
            <person name="Lloyd P."/>
            <person name="Skrzypek M.S."/>
            <person name="Miyasato S.R."/>
            <person name="Simison M."/>
            <person name="Cherry J.M."/>
        </authorList>
    </citation>
    <scope>GENOME REANNOTATION</scope>
    <source>
        <strain>ATCC 204508 / S288c</strain>
    </source>
</reference>
<reference key="5">
    <citation type="journal article" date="2004" name="J. Biol. Chem.">
        <title>Crystal structure of yeast allantoicase reveals a repeated jelly roll motif.</title>
        <authorList>
            <person name="Leulliot N."/>
            <person name="Quevillon-Cheruel S."/>
            <person name="Sorel I."/>
            <person name="Graille M."/>
            <person name="Meyer P."/>
            <person name="Liger D."/>
            <person name="Blondeau K."/>
            <person name="Janin J."/>
            <person name="van Tilbeurgh H."/>
        </authorList>
    </citation>
    <scope>X-RAY CRYSTALLOGRAPHY (2.6 ANGSTROMS)</scope>
</reference>
<reference key="6">
    <citation type="journal article" date="2004" name="Proteins">
        <title>Crystal structure of an allantoicase (YIR029W) from Saccharomyces cerevisiae at 2.4 A resolution.</title>
        <authorList>
            <person name="Xu Q."/>
            <person name="Schwarzenbacher R."/>
            <person name="Page R."/>
            <person name="Sims E."/>
            <person name="Abdubek P."/>
            <person name="Ambing E."/>
            <person name="Biorac T."/>
            <person name="Brinen L.S."/>
            <person name="Cambell J."/>
            <person name="Canaves J.M."/>
            <person name="Chiu H.J."/>
            <person name="Dai X."/>
            <person name="Deacon A.M."/>
            <person name="DiDonato M."/>
            <person name="Elsliger M.-A."/>
            <person name="Floyd R."/>
            <person name="Godzik A."/>
            <person name="Grittini C."/>
            <person name="Grzechnik S.K."/>
            <person name="Hampton E."/>
            <person name="Jaroszewski L."/>
            <person name="Karlak C."/>
            <person name="Klock H.E."/>
            <person name="Koesema E."/>
            <person name="Kovarik J.S."/>
            <person name="Kreusch A."/>
            <person name="Kuhn P."/>
            <person name="Lesley S.A."/>
            <person name="Levin I."/>
            <person name="McMullan D."/>
            <person name="McPhillips T.M."/>
            <person name="Miller M.D."/>
            <person name="Morse A."/>
            <person name="Moy K."/>
            <person name="Ouyang J."/>
            <person name="Quijano K."/>
            <person name="Reyes R."/>
            <person name="Rezezadeh F."/>
            <person name="Robb A."/>
            <person name="Spraggon G."/>
            <person name="Stevens R.C."/>
            <person name="van den Bedem H."/>
            <person name="Velasquez J."/>
            <person name="Vincent J."/>
            <person name="von Delft F."/>
            <person name="Wang X."/>
            <person name="West B."/>
            <person name="Wolf G."/>
            <person name="Hodgson K.O."/>
            <person name="Wooley J."/>
            <person name="Wilson I.A."/>
        </authorList>
    </citation>
    <scope>X-RAY CRYSTALLOGRAPHY (2.4 ANGSTROMS)</scope>
</reference>
<keyword id="KW-0002">3D-structure</keyword>
<keyword id="KW-0378">Hydrolase</keyword>
<keyword id="KW-0659">Purine metabolism</keyword>
<keyword id="KW-1185">Reference proteome</keyword>
<comment type="function">
    <text>Utilization of purines as secondary nitrogen sources, when primary sources are limiting.</text>
</comment>
<comment type="catalytic activity">
    <reaction>
        <text>allantoate + H2O = (S)-ureidoglycolate + urea</text>
        <dbReference type="Rhea" id="RHEA:11016"/>
        <dbReference type="ChEBI" id="CHEBI:15377"/>
        <dbReference type="ChEBI" id="CHEBI:16199"/>
        <dbReference type="ChEBI" id="CHEBI:17536"/>
        <dbReference type="ChEBI" id="CHEBI:57296"/>
        <dbReference type="EC" id="3.5.3.4"/>
    </reaction>
</comment>
<comment type="pathway">
    <text>Nitrogen metabolism; (S)-allantoin degradation; (S)-ureidoglycolate from allantoate (aminidohydrolase route): step 1/1.</text>
</comment>
<comment type="induction">
    <text>Repressed by nitrogen.</text>
</comment>
<comment type="similarity">
    <text evidence="1">Belongs to the allantoicase family.</text>
</comment>